<comment type="alternative products">
    <event type="alternative splicing"/>
    <isoform>
        <id>A6H690-1</id>
        <name>1</name>
        <sequence type="displayed"/>
    </isoform>
    <isoform>
        <id>A6H690-2</id>
        <name>2</name>
        <sequence type="described" ref="VSP_034231"/>
    </isoform>
</comment>
<comment type="similarity">
    <text evidence="6">Belongs to the AAA ATPase family.</text>
</comment>
<comment type="sequence caution" evidence="6">
    <conflict type="erroneous initiation">
        <sequence resource="EMBL-CDS" id="BAC26640"/>
    </conflict>
    <text>Truncated N-terminus.</text>
</comment>
<comment type="sequence caution" evidence="6">
    <conflict type="erroneous termination">
        <sequence resource="EMBL-CDS" id="BAC26640"/>
    </conflict>
    <text>Truncated C-terminus.</text>
</comment>
<name>IQCAL_MOUSE</name>
<proteinExistence type="evidence at protein level"/>
<accession>A6H690</accession>
<accession>B9EHI7</accession>
<accession>E9QN17</accession>
<accession>Q8CDM7</accession>
<protein>
    <recommendedName>
        <fullName>IQ and AAA domain-containing protein 1-like</fullName>
    </recommendedName>
    <alternativeName>
        <fullName>Protein IQCA1P1</fullName>
    </alternativeName>
</protein>
<evidence type="ECO:0000255" key="1"/>
<evidence type="ECO:0000255" key="2">
    <source>
        <dbReference type="PROSITE-ProRule" id="PRU00116"/>
    </source>
</evidence>
<evidence type="ECO:0000256" key="3">
    <source>
        <dbReference type="SAM" id="MobiDB-lite"/>
    </source>
</evidence>
<evidence type="ECO:0000303" key="4">
    <source>
    </source>
</evidence>
<evidence type="ECO:0000303" key="5">
    <source>
    </source>
</evidence>
<evidence type="ECO:0000305" key="6"/>
<organism>
    <name type="scientific">Mus musculus</name>
    <name type="common">Mouse</name>
    <dbReference type="NCBI Taxonomy" id="10090"/>
    <lineage>
        <taxon>Eukaryota</taxon>
        <taxon>Metazoa</taxon>
        <taxon>Chordata</taxon>
        <taxon>Craniata</taxon>
        <taxon>Vertebrata</taxon>
        <taxon>Euteleostomi</taxon>
        <taxon>Mammalia</taxon>
        <taxon>Eutheria</taxon>
        <taxon>Euarchontoglires</taxon>
        <taxon>Glires</taxon>
        <taxon>Rodentia</taxon>
        <taxon>Myomorpha</taxon>
        <taxon>Muroidea</taxon>
        <taxon>Muridae</taxon>
        <taxon>Murinae</taxon>
        <taxon>Mus</taxon>
        <taxon>Mus</taxon>
    </lineage>
</organism>
<feature type="chain" id="PRO_0000341250" description="IQ and AAA domain-containing protein 1-like">
    <location>
        <begin position="1"/>
        <end position="825"/>
    </location>
</feature>
<feature type="domain" description="IQ" evidence="2">
    <location>
        <begin position="206"/>
        <end position="235"/>
    </location>
</feature>
<feature type="region of interest" description="Disordered" evidence="3">
    <location>
        <begin position="344"/>
        <end position="378"/>
    </location>
</feature>
<feature type="region of interest" description="Disordered" evidence="3">
    <location>
        <begin position="459"/>
        <end position="487"/>
    </location>
</feature>
<feature type="compositionally biased region" description="Basic and acidic residues" evidence="3">
    <location>
        <begin position="344"/>
        <end position="366"/>
    </location>
</feature>
<feature type="compositionally biased region" description="Basic residues" evidence="3">
    <location>
        <begin position="467"/>
        <end position="482"/>
    </location>
</feature>
<feature type="binding site" evidence="1">
    <location>
        <begin position="572"/>
        <end position="579"/>
    </location>
    <ligand>
        <name>ATP</name>
        <dbReference type="ChEBI" id="CHEBI:30616"/>
    </ligand>
</feature>
<feature type="splice variant" id="VSP_034231" description="In isoform 2." evidence="4 5">
    <location>
        <begin position="1"/>
        <end position="385"/>
    </location>
</feature>
<feature type="sequence conflict" description="In Ref. 1; BAC26640." evidence="6" ref="1">
    <original>S</original>
    <variation>T</variation>
    <location>
        <position position="788"/>
    </location>
</feature>
<keyword id="KW-0025">Alternative splicing</keyword>
<keyword id="KW-0067">ATP-binding</keyword>
<keyword id="KW-0547">Nucleotide-binding</keyword>
<keyword id="KW-1185">Reference proteome</keyword>
<dbReference type="EMBL" id="AK029839">
    <property type="protein sequence ID" value="BAC26640.1"/>
    <property type="status" value="ALT_SEQ"/>
    <property type="molecule type" value="mRNA"/>
</dbReference>
<dbReference type="EMBL" id="AC116136">
    <property type="status" value="NOT_ANNOTATED_CDS"/>
    <property type="molecule type" value="Genomic_DNA"/>
</dbReference>
<dbReference type="EMBL" id="BC137999">
    <property type="protein sequence ID" value="AAI38000.1"/>
    <property type="molecule type" value="mRNA"/>
</dbReference>
<dbReference type="EMBL" id="BC145792">
    <property type="protein sequence ID" value="AAI45793.1"/>
    <property type="molecule type" value="mRNA"/>
</dbReference>
<dbReference type="CCDS" id="CCDS51435.1">
    <molecule id="A6H690-1"/>
</dbReference>
<dbReference type="RefSeq" id="NP_808344.3">
    <molecule id="A6H690-1"/>
    <property type="nucleotide sequence ID" value="NM_177676.6"/>
</dbReference>
<dbReference type="SMR" id="A6H690"/>
<dbReference type="FunCoup" id="A6H690">
    <property type="interactions" value="1"/>
</dbReference>
<dbReference type="STRING" id="10090.ENSMUSP00000085642"/>
<dbReference type="iPTMnet" id="A6H690"/>
<dbReference type="PhosphoSitePlus" id="A6H690"/>
<dbReference type="SwissPalm" id="A6H690"/>
<dbReference type="jPOST" id="A6H690"/>
<dbReference type="PaxDb" id="10090-ENSMUSP00000085642"/>
<dbReference type="PeptideAtlas" id="A6H690"/>
<dbReference type="ProteomicsDB" id="269500">
    <molecule id="A6H690-1"/>
</dbReference>
<dbReference type="ProteomicsDB" id="269501">
    <molecule id="A6H690-2"/>
</dbReference>
<dbReference type="DNASU" id="231045"/>
<dbReference type="Ensembl" id="ENSMUST00000088302.10">
    <molecule id="A6H690-1"/>
    <property type="protein sequence ID" value="ENSMUSP00000085642.6"/>
    <property type="gene ID" value="ENSMUSG00000038199.13"/>
</dbReference>
<dbReference type="GeneID" id="231045"/>
<dbReference type="KEGG" id="mmu:231045"/>
<dbReference type="UCSC" id="uc008wrz.2">
    <molecule id="A6H690-1"/>
    <property type="organism name" value="mouse"/>
</dbReference>
<dbReference type="AGR" id="MGI:3045319"/>
<dbReference type="CTD" id="392843"/>
<dbReference type="MGI" id="MGI:3045319">
    <property type="gene designation" value="Iqca1l"/>
</dbReference>
<dbReference type="VEuPathDB" id="HostDB:ENSMUSG00000038199"/>
<dbReference type="eggNOG" id="KOG0740">
    <property type="taxonomic scope" value="Eukaryota"/>
</dbReference>
<dbReference type="GeneTree" id="ENSGT00940000154067"/>
<dbReference type="HOGENOM" id="CLU_005923_0_0_1"/>
<dbReference type="InParanoid" id="A6H690"/>
<dbReference type="OMA" id="WFIECRA"/>
<dbReference type="OrthoDB" id="3046016at2759"/>
<dbReference type="PhylomeDB" id="A6H690"/>
<dbReference type="TreeFam" id="TF324350"/>
<dbReference type="BioGRID-ORCS" id="231045">
    <property type="hits" value="3 hits in 76 CRISPR screens"/>
</dbReference>
<dbReference type="PRO" id="PR:A6H690"/>
<dbReference type="Proteomes" id="UP000000589">
    <property type="component" value="Chromosome 5"/>
</dbReference>
<dbReference type="RNAct" id="A6H690">
    <property type="molecule type" value="protein"/>
</dbReference>
<dbReference type="Bgee" id="ENSMUSG00000038199">
    <property type="expression patterns" value="Expressed in testis and 11 other cell types or tissues"/>
</dbReference>
<dbReference type="ExpressionAtlas" id="A6H690">
    <property type="expression patterns" value="baseline and differential"/>
</dbReference>
<dbReference type="GO" id="GO:0005524">
    <property type="term" value="F:ATP binding"/>
    <property type="evidence" value="ECO:0007669"/>
    <property type="project" value="UniProtKB-KW"/>
</dbReference>
<dbReference type="GO" id="GO:0016887">
    <property type="term" value="F:ATP hydrolysis activity"/>
    <property type="evidence" value="ECO:0007669"/>
    <property type="project" value="InterPro"/>
</dbReference>
<dbReference type="FunFam" id="1.10.8.60:FF:000064">
    <property type="entry name" value="IQ motif containing with AAA domain 1"/>
    <property type="match status" value="1"/>
</dbReference>
<dbReference type="Gene3D" id="1.10.8.60">
    <property type="match status" value="1"/>
</dbReference>
<dbReference type="Gene3D" id="3.40.50.300">
    <property type="entry name" value="P-loop containing nucleotide triphosphate hydrolases"/>
    <property type="match status" value="1"/>
</dbReference>
<dbReference type="InterPro" id="IPR003959">
    <property type="entry name" value="ATPase_AAA_core"/>
</dbReference>
<dbReference type="InterPro" id="IPR000048">
    <property type="entry name" value="IQ_motif_EF-hand-BS"/>
</dbReference>
<dbReference type="InterPro" id="IPR052267">
    <property type="entry name" value="N-DRC_Component"/>
</dbReference>
<dbReference type="InterPro" id="IPR027417">
    <property type="entry name" value="P-loop_NTPase"/>
</dbReference>
<dbReference type="PANTHER" id="PTHR14690:SF6">
    <property type="entry name" value="IQ AND AAA DOMAIN-CONTAINING PROTEIN 1-LIKE"/>
    <property type="match status" value="1"/>
</dbReference>
<dbReference type="PANTHER" id="PTHR14690">
    <property type="entry name" value="IQ MOTIF CONTAINING WITH AAA DOMAIN 1"/>
    <property type="match status" value="1"/>
</dbReference>
<dbReference type="Pfam" id="PF00004">
    <property type="entry name" value="AAA"/>
    <property type="match status" value="1"/>
</dbReference>
<dbReference type="Pfam" id="PF00612">
    <property type="entry name" value="IQ"/>
    <property type="match status" value="1"/>
</dbReference>
<dbReference type="SUPFAM" id="SSF52540">
    <property type="entry name" value="P-loop containing nucleoside triphosphate hydrolases"/>
    <property type="match status" value="1"/>
</dbReference>
<dbReference type="PROSITE" id="PS50096">
    <property type="entry name" value="IQ"/>
    <property type="match status" value="1"/>
</dbReference>
<reference key="1">
    <citation type="journal article" date="2005" name="Science">
        <title>The transcriptional landscape of the mammalian genome.</title>
        <authorList>
            <person name="Carninci P."/>
            <person name="Kasukawa T."/>
            <person name="Katayama S."/>
            <person name="Gough J."/>
            <person name="Frith M.C."/>
            <person name="Maeda N."/>
            <person name="Oyama R."/>
            <person name="Ravasi T."/>
            <person name="Lenhard B."/>
            <person name="Wells C."/>
            <person name="Kodzius R."/>
            <person name="Shimokawa K."/>
            <person name="Bajic V.B."/>
            <person name="Brenner S.E."/>
            <person name="Batalov S."/>
            <person name="Forrest A.R."/>
            <person name="Zavolan M."/>
            <person name="Davis M.J."/>
            <person name="Wilming L.G."/>
            <person name="Aidinis V."/>
            <person name="Allen J.E."/>
            <person name="Ambesi-Impiombato A."/>
            <person name="Apweiler R."/>
            <person name="Aturaliya R.N."/>
            <person name="Bailey T.L."/>
            <person name="Bansal M."/>
            <person name="Baxter L."/>
            <person name="Beisel K.W."/>
            <person name="Bersano T."/>
            <person name="Bono H."/>
            <person name="Chalk A.M."/>
            <person name="Chiu K.P."/>
            <person name="Choudhary V."/>
            <person name="Christoffels A."/>
            <person name="Clutterbuck D.R."/>
            <person name="Crowe M.L."/>
            <person name="Dalla E."/>
            <person name="Dalrymple B.P."/>
            <person name="de Bono B."/>
            <person name="Della Gatta G."/>
            <person name="di Bernardo D."/>
            <person name="Down T."/>
            <person name="Engstrom P."/>
            <person name="Fagiolini M."/>
            <person name="Faulkner G."/>
            <person name="Fletcher C.F."/>
            <person name="Fukushima T."/>
            <person name="Furuno M."/>
            <person name="Futaki S."/>
            <person name="Gariboldi M."/>
            <person name="Georgii-Hemming P."/>
            <person name="Gingeras T.R."/>
            <person name="Gojobori T."/>
            <person name="Green R.E."/>
            <person name="Gustincich S."/>
            <person name="Harbers M."/>
            <person name="Hayashi Y."/>
            <person name="Hensch T.K."/>
            <person name="Hirokawa N."/>
            <person name="Hill D."/>
            <person name="Huminiecki L."/>
            <person name="Iacono M."/>
            <person name="Ikeo K."/>
            <person name="Iwama A."/>
            <person name="Ishikawa T."/>
            <person name="Jakt M."/>
            <person name="Kanapin A."/>
            <person name="Katoh M."/>
            <person name="Kawasawa Y."/>
            <person name="Kelso J."/>
            <person name="Kitamura H."/>
            <person name="Kitano H."/>
            <person name="Kollias G."/>
            <person name="Krishnan S.P."/>
            <person name="Kruger A."/>
            <person name="Kummerfeld S.K."/>
            <person name="Kurochkin I.V."/>
            <person name="Lareau L.F."/>
            <person name="Lazarevic D."/>
            <person name="Lipovich L."/>
            <person name="Liu J."/>
            <person name="Liuni S."/>
            <person name="McWilliam S."/>
            <person name="Madan Babu M."/>
            <person name="Madera M."/>
            <person name="Marchionni L."/>
            <person name="Matsuda H."/>
            <person name="Matsuzawa S."/>
            <person name="Miki H."/>
            <person name="Mignone F."/>
            <person name="Miyake S."/>
            <person name="Morris K."/>
            <person name="Mottagui-Tabar S."/>
            <person name="Mulder N."/>
            <person name="Nakano N."/>
            <person name="Nakauchi H."/>
            <person name="Ng P."/>
            <person name="Nilsson R."/>
            <person name="Nishiguchi S."/>
            <person name="Nishikawa S."/>
            <person name="Nori F."/>
            <person name="Ohara O."/>
            <person name="Okazaki Y."/>
            <person name="Orlando V."/>
            <person name="Pang K.C."/>
            <person name="Pavan W.J."/>
            <person name="Pavesi G."/>
            <person name="Pesole G."/>
            <person name="Petrovsky N."/>
            <person name="Piazza S."/>
            <person name="Reed J."/>
            <person name="Reid J.F."/>
            <person name="Ring B.Z."/>
            <person name="Ringwald M."/>
            <person name="Rost B."/>
            <person name="Ruan Y."/>
            <person name="Salzberg S.L."/>
            <person name="Sandelin A."/>
            <person name="Schneider C."/>
            <person name="Schoenbach C."/>
            <person name="Sekiguchi K."/>
            <person name="Semple C.A."/>
            <person name="Seno S."/>
            <person name="Sessa L."/>
            <person name="Sheng Y."/>
            <person name="Shibata Y."/>
            <person name="Shimada H."/>
            <person name="Shimada K."/>
            <person name="Silva D."/>
            <person name="Sinclair B."/>
            <person name="Sperling S."/>
            <person name="Stupka E."/>
            <person name="Sugiura K."/>
            <person name="Sultana R."/>
            <person name="Takenaka Y."/>
            <person name="Taki K."/>
            <person name="Tammoja K."/>
            <person name="Tan S.L."/>
            <person name="Tang S."/>
            <person name="Taylor M.S."/>
            <person name="Tegner J."/>
            <person name="Teichmann S.A."/>
            <person name="Ueda H.R."/>
            <person name="van Nimwegen E."/>
            <person name="Verardo R."/>
            <person name="Wei C.L."/>
            <person name="Yagi K."/>
            <person name="Yamanishi H."/>
            <person name="Zabarovsky E."/>
            <person name="Zhu S."/>
            <person name="Zimmer A."/>
            <person name="Hide W."/>
            <person name="Bult C."/>
            <person name="Grimmond S.M."/>
            <person name="Teasdale R.D."/>
            <person name="Liu E.T."/>
            <person name="Brusic V."/>
            <person name="Quackenbush J."/>
            <person name="Wahlestedt C."/>
            <person name="Mattick J.S."/>
            <person name="Hume D.A."/>
            <person name="Kai C."/>
            <person name="Sasaki D."/>
            <person name="Tomaru Y."/>
            <person name="Fukuda S."/>
            <person name="Kanamori-Katayama M."/>
            <person name="Suzuki M."/>
            <person name="Aoki J."/>
            <person name="Arakawa T."/>
            <person name="Iida J."/>
            <person name="Imamura K."/>
            <person name="Itoh M."/>
            <person name="Kato T."/>
            <person name="Kawaji H."/>
            <person name="Kawagashira N."/>
            <person name="Kawashima T."/>
            <person name="Kojima M."/>
            <person name="Kondo S."/>
            <person name="Konno H."/>
            <person name="Nakano K."/>
            <person name="Ninomiya N."/>
            <person name="Nishio T."/>
            <person name="Okada M."/>
            <person name="Plessy C."/>
            <person name="Shibata K."/>
            <person name="Shiraki T."/>
            <person name="Suzuki S."/>
            <person name="Tagami M."/>
            <person name="Waki K."/>
            <person name="Watahiki A."/>
            <person name="Okamura-Oho Y."/>
            <person name="Suzuki H."/>
            <person name="Kawai J."/>
            <person name="Hayashizaki Y."/>
        </authorList>
    </citation>
    <scope>NUCLEOTIDE SEQUENCE [LARGE SCALE MRNA] (ISOFORM 2)</scope>
    <source>
        <strain>C57BL/6J</strain>
        <tissue>Testis</tissue>
    </source>
</reference>
<reference key="2">
    <citation type="journal article" date="2009" name="PLoS Biol.">
        <title>Lineage-specific biology revealed by a finished genome assembly of the mouse.</title>
        <authorList>
            <person name="Church D.M."/>
            <person name="Goodstadt L."/>
            <person name="Hillier L.W."/>
            <person name="Zody M.C."/>
            <person name="Goldstein S."/>
            <person name="She X."/>
            <person name="Bult C.J."/>
            <person name="Agarwala R."/>
            <person name="Cherry J.L."/>
            <person name="DiCuccio M."/>
            <person name="Hlavina W."/>
            <person name="Kapustin Y."/>
            <person name="Meric P."/>
            <person name="Maglott D."/>
            <person name="Birtle Z."/>
            <person name="Marques A.C."/>
            <person name="Graves T."/>
            <person name="Zhou S."/>
            <person name="Teague B."/>
            <person name="Potamousis K."/>
            <person name="Churas C."/>
            <person name="Place M."/>
            <person name="Herschleb J."/>
            <person name="Runnheim R."/>
            <person name="Forrest D."/>
            <person name="Amos-Landgraf J."/>
            <person name="Schwartz D.C."/>
            <person name="Cheng Z."/>
            <person name="Lindblad-Toh K."/>
            <person name="Eichler E.E."/>
            <person name="Ponting C.P."/>
        </authorList>
    </citation>
    <scope>NUCLEOTIDE SEQUENCE [LARGE SCALE GENOMIC DNA]</scope>
    <source>
        <strain>C57BL/6J</strain>
    </source>
</reference>
<reference key="3">
    <citation type="journal article" date="2004" name="Genome Res.">
        <title>The status, quality, and expansion of the NIH full-length cDNA project: the Mammalian Gene Collection (MGC).</title>
        <authorList>
            <consortium name="The MGC Project Team"/>
        </authorList>
    </citation>
    <scope>NUCLEOTIDE SEQUENCE [LARGE SCALE MRNA] (ISOFORM 2)</scope>
    <source>
        <tissue>Brain</tissue>
    </source>
</reference>
<reference key="4">
    <citation type="journal article" date="2010" name="Cell">
        <title>A tissue-specific atlas of mouse protein phosphorylation and expression.</title>
        <authorList>
            <person name="Huttlin E.L."/>
            <person name="Jedrychowski M.P."/>
            <person name="Elias J.E."/>
            <person name="Goswami T."/>
            <person name="Rad R."/>
            <person name="Beausoleil S.A."/>
            <person name="Villen J."/>
            <person name="Haas W."/>
            <person name="Sowa M.E."/>
            <person name="Gygi S.P."/>
        </authorList>
    </citation>
    <scope>IDENTIFICATION BY MASS SPECTROMETRY [LARGE SCALE ANALYSIS]</scope>
    <source>
        <tissue>Testis</tissue>
    </source>
</reference>
<sequence>MSEGTYQRLWEASHVTLEEVLEKEPSVLEPVPSRERQSFQYRISVLYLYYLGLLRRFNLAYDQMVQPQKRRLLRRLLDGVAGRVLELKDELVRVDLCETHCLDRVLQDLKLTPADLEVPIPKYFQLEQSSAVKARQQMLADILNRLEPLVSQENLRGLSRTAALILVQSAERARQGRLRATFMREIRKEEERDRRIWENGQQKFSRDQGAIVIQKVWKGYLQRKRIEQDRRVEMEFIGMLPSPNQTARLNTLNQAFLGEESRRMRQVEKEEEFQEAIGKTYESLTETEGPDMKERMKDQIRQWFIECHALTGRFPDYPDEASGGSYLIFADKTPEQVRLDLEAQAQESRKKDQEKKEKNKEKEKEKKEKKKKKVKEEKVKKEPEVMFRVLPSKSIPVINAGHEEYTSVWKSRYDNKHPSQNFDSETLREEKRKQVEMEIRVQVDELMRQELKNLRLAVDREETRPLKSPKKKGGKKSGKKKKEKDLTPDRSVDSLFEELVIIGLIKKSALVTLSDYIGDCLYLGSTLTLANKMPMPSLFDIRQNMALYGVLRLGSHDIHTMAPLVRSILLVGPSGMGKKMLVQAVCTETGANLFDLSPDNLMGKYPGKNGAQLLVHIVFKVARLLQPSVIWIGNTEKTFYKKVPKEERTMDPKRIKKDLMRATKQLSPGDRVMLIGTTERPQLAEMKGLCRFYERILFIPRPDYASRYVLWKRMIESQGRGVQLTSSLDVSALARVSDGYTPSHILQSIQSVLTERRLLQLIKKPLVASEFVGHLARLDPVYREEEESLKEWFFKTPLGKKNMKFTKDQLEAEEARLTKEKKKKK</sequence>
<gene>
    <name type="primary">Iqca1l</name>
    <name type="synonym">Iqca1p1</name>
</gene>